<sequence length="652" mass="71818">MLYPEEFDVIVVGGGHAGTEAALAAARMGAKTLLLSHNIETLGQMSCNPSIGGIGKGHLVKEVDALGGAMAIATDEAGIQFRILNSSKGPAVRATRAQADRVLYKAAIRHRLENQPNLSLFQQAVDDLMVEGDRVVGAVTQVGIAFRARTVVLTAGTFLDGRIHVGLDNYQAGRAGDPPAVSLSARLKELKLPQGRLKTGTPPRLDGRSIDFSKCTEQAGDGMPGGAGPMPVFSFMGRADMHPQQMPCWITHTNARTHDIIRSGFDRSPMFTGKIDGVGPRYCPSVEDKINRFADKESHQIFLEPEGLTTNEYYPNGISTSLPFDIQYQLVRSMPGLENAHILRPGYAIEYDYFDPRELKSSFETRSIKGLFFAGQINGTTGYEEAAAQGLFAGINAALQCRGEEAWLPRRDEAYLGVLVDDLITKGVTEPYRMFTSRAEFRLQLREDNADMRLTEAGRKLGLVDDARWDAFSRKRDTVSRETERLKSIWVNPRNLPAAESERVLGKAIEHEYNLADLLRRPDVNYETLMSLDGGKYSAGSPLSEIEIEQIEISAKYSGYIERQHDEVERAAHFENLRLPADFDYSQVKALSFEVRQKLDKHRPETLGLASRISGVTPAAISLLMIHLRKGGHKAFNRDAATEAAAESQPAQ</sequence>
<comment type="function">
    <text evidence="1">NAD-binding protein involved in the addition of a carboxymethylaminomethyl (cmnm) group at the wobble position (U34) of certain tRNAs, forming tRNA-cmnm(5)s(2)U34.</text>
</comment>
<comment type="cofactor">
    <cofactor evidence="1">
        <name>FAD</name>
        <dbReference type="ChEBI" id="CHEBI:57692"/>
    </cofactor>
</comment>
<comment type="subunit">
    <text evidence="1">Homodimer. Heterotetramer of two MnmE and two MnmG subunits.</text>
</comment>
<comment type="subcellular location">
    <subcellularLocation>
        <location evidence="1">Cytoplasm</location>
    </subcellularLocation>
</comment>
<comment type="similarity">
    <text evidence="1">Belongs to the MnmG family.</text>
</comment>
<evidence type="ECO:0000255" key="1">
    <source>
        <dbReference type="HAMAP-Rule" id="MF_00129"/>
    </source>
</evidence>
<keyword id="KW-0963">Cytoplasm</keyword>
<keyword id="KW-0274">FAD</keyword>
<keyword id="KW-0285">Flavoprotein</keyword>
<keyword id="KW-0520">NAD</keyword>
<keyword id="KW-0819">tRNA processing</keyword>
<name>MNMG_VARPS</name>
<dbReference type="EMBL" id="CP001635">
    <property type="protein sequence ID" value="ACS16708.1"/>
    <property type="molecule type" value="Genomic_DNA"/>
</dbReference>
<dbReference type="SMR" id="C5CW10"/>
<dbReference type="STRING" id="543728.Vapar_0045"/>
<dbReference type="KEGG" id="vap:Vapar_0045"/>
<dbReference type="eggNOG" id="COG0445">
    <property type="taxonomic scope" value="Bacteria"/>
</dbReference>
<dbReference type="HOGENOM" id="CLU_007831_2_2_4"/>
<dbReference type="OrthoDB" id="9815560at2"/>
<dbReference type="GO" id="GO:0005829">
    <property type="term" value="C:cytosol"/>
    <property type="evidence" value="ECO:0007669"/>
    <property type="project" value="TreeGrafter"/>
</dbReference>
<dbReference type="GO" id="GO:0050660">
    <property type="term" value="F:flavin adenine dinucleotide binding"/>
    <property type="evidence" value="ECO:0007669"/>
    <property type="project" value="UniProtKB-UniRule"/>
</dbReference>
<dbReference type="GO" id="GO:0030488">
    <property type="term" value="P:tRNA methylation"/>
    <property type="evidence" value="ECO:0007669"/>
    <property type="project" value="TreeGrafter"/>
</dbReference>
<dbReference type="GO" id="GO:0002098">
    <property type="term" value="P:tRNA wobble uridine modification"/>
    <property type="evidence" value="ECO:0007669"/>
    <property type="project" value="InterPro"/>
</dbReference>
<dbReference type="FunFam" id="1.10.10.1800:FF:000001">
    <property type="entry name" value="tRNA uridine 5-carboxymethylaminomethyl modification enzyme MnmG"/>
    <property type="match status" value="1"/>
</dbReference>
<dbReference type="FunFam" id="1.10.150.570:FF:000001">
    <property type="entry name" value="tRNA uridine 5-carboxymethylaminomethyl modification enzyme MnmG"/>
    <property type="match status" value="1"/>
</dbReference>
<dbReference type="FunFam" id="3.50.50.60:FF:000002">
    <property type="entry name" value="tRNA uridine 5-carboxymethylaminomethyl modification enzyme MnmG"/>
    <property type="match status" value="1"/>
</dbReference>
<dbReference type="FunFam" id="3.50.50.60:FF:000010">
    <property type="entry name" value="tRNA uridine 5-carboxymethylaminomethyl modification enzyme MnmG"/>
    <property type="match status" value="1"/>
</dbReference>
<dbReference type="Gene3D" id="3.50.50.60">
    <property type="entry name" value="FAD/NAD(P)-binding domain"/>
    <property type="match status" value="2"/>
</dbReference>
<dbReference type="Gene3D" id="1.10.150.570">
    <property type="entry name" value="GidA associated domain, C-terminal subdomain"/>
    <property type="match status" value="1"/>
</dbReference>
<dbReference type="Gene3D" id="1.10.10.1800">
    <property type="entry name" value="tRNA uridine 5-carboxymethylaminomethyl modification enzyme MnmG/GidA"/>
    <property type="match status" value="1"/>
</dbReference>
<dbReference type="HAMAP" id="MF_00129">
    <property type="entry name" value="MnmG_GidA"/>
    <property type="match status" value="1"/>
</dbReference>
<dbReference type="InterPro" id="IPR036188">
    <property type="entry name" value="FAD/NAD-bd_sf"/>
</dbReference>
<dbReference type="InterPro" id="IPR049312">
    <property type="entry name" value="GIDA_C_N"/>
</dbReference>
<dbReference type="InterPro" id="IPR004416">
    <property type="entry name" value="MnmG"/>
</dbReference>
<dbReference type="InterPro" id="IPR002218">
    <property type="entry name" value="MnmG-rel"/>
</dbReference>
<dbReference type="InterPro" id="IPR020595">
    <property type="entry name" value="MnmG-rel_CS"/>
</dbReference>
<dbReference type="InterPro" id="IPR026904">
    <property type="entry name" value="MnmG_C"/>
</dbReference>
<dbReference type="InterPro" id="IPR047001">
    <property type="entry name" value="MnmG_C_subdom"/>
</dbReference>
<dbReference type="InterPro" id="IPR044920">
    <property type="entry name" value="MnmG_C_subdom_sf"/>
</dbReference>
<dbReference type="InterPro" id="IPR040131">
    <property type="entry name" value="MnmG_N"/>
</dbReference>
<dbReference type="NCBIfam" id="TIGR00136">
    <property type="entry name" value="mnmG_gidA"/>
    <property type="match status" value="1"/>
</dbReference>
<dbReference type="PANTHER" id="PTHR11806">
    <property type="entry name" value="GLUCOSE INHIBITED DIVISION PROTEIN A"/>
    <property type="match status" value="1"/>
</dbReference>
<dbReference type="PANTHER" id="PTHR11806:SF0">
    <property type="entry name" value="PROTEIN MTO1 HOMOLOG, MITOCHONDRIAL"/>
    <property type="match status" value="1"/>
</dbReference>
<dbReference type="Pfam" id="PF01134">
    <property type="entry name" value="GIDA"/>
    <property type="match status" value="1"/>
</dbReference>
<dbReference type="Pfam" id="PF21680">
    <property type="entry name" value="GIDA_C_1st"/>
    <property type="match status" value="1"/>
</dbReference>
<dbReference type="Pfam" id="PF13932">
    <property type="entry name" value="SAM_GIDA_C"/>
    <property type="match status" value="1"/>
</dbReference>
<dbReference type="SMART" id="SM01228">
    <property type="entry name" value="GIDA_assoc_3"/>
    <property type="match status" value="1"/>
</dbReference>
<dbReference type="SUPFAM" id="SSF51905">
    <property type="entry name" value="FAD/NAD(P)-binding domain"/>
    <property type="match status" value="1"/>
</dbReference>
<dbReference type="PROSITE" id="PS01280">
    <property type="entry name" value="GIDA_1"/>
    <property type="match status" value="1"/>
</dbReference>
<dbReference type="PROSITE" id="PS01281">
    <property type="entry name" value="GIDA_2"/>
    <property type="match status" value="1"/>
</dbReference>
<protein>
    <recommendedName>
        <fullName evidence="1">tRNA uridine 5-carboxymethylaminomethyl modification enzyme MnmG</fullName>
    </recommendedName>
    <alternativeName>
        <fullName evidence="1">Glucose-inhibited division protein A</fullName>
    </alternativeName>
</protein>
<gene>
    <name evidence="1" type="primary">mnmG</name>
    <name evidence="1" type="synonym">gidA</name>
    <name type="ordered locus">Vapar_0045</name>
</gene>
<feature type="chain" id="PRO_1000203171" description="tRNA uridine 5-carboxymethylaminomethyl modification enzyme MnmG">
    <location>
        <begin position="1"/>
        <end position="652"/>
    </location>
</feature>
<feature type="binding site" evidence="1">
    <location>
        <begin position="13"/>
        <end position="18"/>
    </location>
    <ligand>
        <name>FAD</name>
        <dbReference type="ChEBI" id="CHEBI:57692"/>
    </ligand>
</feature>
<feature type="binding site" evidence="1">
    <location>
        <begin position="279"/>
        <end position="293"/>
    </location>
    <ligand>
        <name>NAD(+)</name>
        <dbReference type="ChEBI" id="CHEBI:57540"/>
    </ligand>
</feature>
<proteinExistence type="inferred from homology"/>
<reference key="1">
    <citation type="journal article" date="2011" name="J. Bacteriol.">
        <title>Complete genome sequence of the metabolically versatile plant growth-promoting endophyte, Variovorax paradoxus S110.</title>
        <authorList>
            <person name="Han J.I."/>
            <person name="Choi H.K."/>
            <person name="Lee S.W."/>
            <person name="Orwin P.M."/>
            <person name="Kim J."/>
            <person name="Laroe S.L."/>
            <person name="Kim T.G."/>
            <person name="O'Neil J."/>
            <person name="Leadbetter J.R."/>
            <person name="Lee S.Y."/>
            <person name="Hur C.G."/>
            <person name="Spain J.C."/>
            <person name="Ovchinnikova G."/>
            <person name="Goodwin L."/>
            <person name="Han C."/>
        </authorList>
    </citation>
    <scope>NUCLEOTIDE SEQUENCE [LARGE SCALE GENOMIC DNA]</scope>
    <source>
        <strain>S110</strain>
    </source>
</reference>
<accession>C5CW10</accession>
<organism>
    <name type="scientific">Variovorax paradoxus (strain S110)</name>
    <dbReference type="NCBI Taxonomy" id="543728"/>
    <lineage>
        <taxon>Bacteria</taxon>
        <taxon>Pseudomonadati</taxon>
        <taxon>Pseudomonadota</taxon>
        <taxon>Betaproteobacteria</taxon>
        <taxon>Burkholderiales</taxon>
        <taxon>Comamonadaceae</taxon>
        <taxon>Variovorax</taxon>
    </lineage>
</organism>